<protein>
    <recommendedName>
        <fullName evidence="1">ATP-dependent dethiobiotin synthetase BioD</fullName>
        <ecNumber evidence="1">6.3.3.3</ecNumber>
    </recommendedName>
    <alternativeName>
        <fullName evidence="1">DTB synthetase</fullName>
        <shortName evidence="1">DTBS</shortName>
    </alternativeName>
    <alternativeName>
        <fullName evidence="1">Dethiobiotin synthase</fullName>
    </alternativeName>
</protein>
<dbReference type="EC" id="6.3.3.3" evidence="1"/>
<dbReference type="EMBL" id="CP000967">
    <property type="protein sequence ID" value="ACD61075.1"/>
    <property type="molecule type" value="Genomic_DNA"/>
</dbReference>
<dbReference type="RefSeq" id="WP_011407597.1">
    <property type="nucleotide sequence ID" value="NC_010717.2"/>
</dbReference>
<dbReference type="SMR" id="B2SQ77"/>
<dbReference type="KEGG" id="xop:PXO_03143"/>
<dbReference type="eggNOG" id="COG0132">
    <property type="taxonomic scope" value="Bacteria"/>
</dbReference>
<dbReference type="HOGENOM" id="CLU_072551_0_0_6"/>
<dbReference type="UniPathway" id="UPA00078">
    <property type="reaction ID" value="UER00161"/>
</dbReference>
<dbReference type="Proteomes" id="UP000001740">
    <property type="component" value="Chromosome"/>
</dbReference>
<dbReference type="GO" id="GO:0005829">
    <property type="term" value="C:cytosol"/>
    <property type="evidence" value="ECO:0007669"/>
    <property type="project" value="TreeGrafter"/>
</dbReference>
<dbReference type="GO" id="GO:0005524">
    <property type="term" value="F:ATP binding"/>
    <property type="evidence" value="ECO:0007669"/>
    <property type="project" value="UniProtKB-UniRule"/>
</dbReference>
<dbReference type="GO" id="GO:0004141">
    <property type="term" value="F:dethiobiotin synthase activity"/>
    <property type="evidence" value="ECO:0007669"/>
    <property type="project" value="UniProtKB-UniRule"/>
</dbReference>
<dbReference type="GO" id="GO:0000287">
    <property type="term" value="F:magnesium ion binding"/>
    <property type="evidence" value="ECO:0007669"/>
    <property type="project" value="UniProtKB-UniRule"/>
</dbReference>
<dbReference type="GO" id="GO:0009102">
    <property type="term" value="P:biotin biosynthetic process"/>
    <property type="evidence" value="ECO:0007669"/>
    <property type="project" value="UniProtKB-UniRule"/>
</dbReference>
<dbReference type="CDD" id="cd03109">
    <property type="entry name" value="DTBS"/>
    <property type="match status" value="1"/>
</dbReference>
<dbReference type="FunFam" id="3.40.50.300:FF:000292">
    <property type="entry name" value="ATP-dependent dethiobiotin synthetase BioD"/>
    <property type="match status" value="1"/>
</dbReference>
<dbReference type="Gene3D" id="3.40.50.300">
    <property type="entry name" value="P-loop containing nucleotide triphosphate hydrolases"/>
    <property type="match status" value="1"/>
</dbReference>
<dbReference type="HAMAP" id="MF_00336">
    <property type="entry name" value="BioD"/>
    <property type="match status" value="1"/>
</dbReference>
<dbReference type="InterPro" id="IPR004472">
    <property type="entry name" value="DTB_synth_BioD"/>
</dbReference>
<dbReference type="InterPro" id="IPR027417">
    <property type="entry name" value="P-loop_NTPase"/>
</dbReference>
<dbReference type="NCBIfam" id="TIGR00347">
    <property type="entry name" value="bioD"/>
    <property type="match status" value="1"/>
</dbReference>
<dbReference type="PANTHER" id="PTHR43210">
    <property type="entry name" value="DETHIOBIOTIN SYNTHETASE"/>
    <property type="match status" value="1"/>
</dbReference>
<dbReference type="PANTHER" id="PTHR43210:SF5">
    <property type="entry name" value="DETHIOBIOTIN SYNTHETASE"/>
    <property type="match status" value="1"/>
</dbReference>
<dbReference type="Pfam" id="PF13500">
    <property type="entry name" value="AAA_26"/>
    <property type="match status" value="1"/>
</dbReference>
<dbReference type="PIRSF" id="PIRSF006755">
    <property type="entry name" value="DTB_synth"/>
    <property type="match status" value="1"/>
</dbReference>
<dbReference type="SUPFAM" id="SSF52540">
    <property type="entry name" value="P-loop containing nucleoside triphosphate hydrolases"/>
    <property type="match status" value="1"/>
</dbReference>
<reference key="1">
    <citation type="journal article" date="2008" name="BMC Genomics">
        <title>Genome sequence and rapid evolution of the rice pathogen Xanthomonas oryzae pv. oryzae PXO99A.</title>
        <authorList>
            <person name="Salzberg S.L."/>
            <person name="Sommer D.D."/>
            <person name="Schatz M.C."/>
            <person name="Phillippy A.M."/>
            <person name="Rabinowicz P.D."/>
            <person name="Tsuge S."/>
            <person name="Furutani A."/>
            <person name="Ochiai H."/>
            <person name="Delcher A.L."/>
            <person name="Kelley D."/>
            <person name="Madupu R."/>
            <person name="Puiu D."/>
            <person name="Radune D."/>
            <person name="Shumway M."/>
            <person name="Trapnell C."/>
            <person name="Aparna G."/>
            <person name="Jha G."/>
            <person name="Pandey A."/>
            <person name="Patil P.B."/>
            <person name="Ishihara H."/>
            <person name="Meyer D.F."/>
            <person name="Szurek B."/>
            <person name="Verdier V."/>
            <person name="Koebnik R."/>
            <person name="Dow J.M."/>
            <person name="Ryan R.P."/>
            <person name="Hirata H."/>
            <person name="Tsuyumu S."/>
            <person name="Won Lee S."/>
            <person name="Seo Y.-S."/>
            <person name="Sriariyanum M."/>
            <person name="Ronald P.C."/>
            <person name="Sonti R.V."/>
            <person name="Van Sluys M.-A."/>
            <person name="Leach J.E."/>
            <person name="White F.F."/>
            <person name="Bogdanove A.J."/>
        </authorList>
    </citation>
    <scope>NUCLEOTIDE SEQUENCE [LARGE SCALE GENOMIC DNA]</scope>
    <source>
        <strain>PXO99A</strain>
    </source>
</reference>
<keyword id="KW-0067">ATP-binding</keyword>
<keyword id="KW-0093">Biotin biosynthesis</keyword>
<keyword id="KW-0963">Cytoplasm</keyword>
<keyword id="KW-0436">Ligase</keyword>
<keyword id="KW-0460">Magnesium</keyword>
<keyword id="KW-0479">Metal-binding</keyword>
<keyword id="KW-0547">Nucleotide-binding</keyword>
<organism>
    <name type="scientific">Xanthomonas oryzae pv. oryzae (strain PXO99A)</name>
    <dbReference type="NCBI Taxonomy" id="360094"/>
    <lineage>
        <taxon>Bacteria</taxon>
        <taxon>Pseudomonadati</taxon>
        <taxon>Pseudomonadota</taxon>
        <taxon>Gammaproteobacteria</taxon>
        <taxon>Lysobacterales</taxon>
        <taxon>Lysobacteraceae</taxon>
        <taxon>Xanthomonas</taxon>
    </lineage>
</organism>
<sequence length="224" mass="23577">MQPPAFYVTGTDTGIGKTMGSTALLHALRARGHTAVGMKPVASGCERTPQGWRNEDALALQAASNPQPAYATLNPYALPAPLAPELAAADVGVTLSLEPITQAFAQLRAQAEVVVVEGVGGWAAPLSATLDQADLVRALQLPVVLVVGVRLGCINHARLTAAAIAADGLQCIGWIANEVDPQMERVEENIGMLRQRLAMPCWGRIPWRPDAEAAAQAQGLQLPR</sequence>
<feature type="chain" id="PRO_1000119888" description="ATP-dependent dethiobiotin synthetase BioD">
    <location>
        <begin position="1"/>
        <end position="224"/>
    </location>
</feature>
<feature type="active site" evidence="1">
    <location>
        <position position="39"/>
    </location>
</feature>
<feature type="binding site" evidence="1">
    <location>
        <position position="18"/>
    </location>
    <ligand>
        <name>Mg(2+)</name>
        <dbReference type="ChEBI" id="CHEBI:18420"/>
    </ligand>
</feature>
<feature type="binding site" evidence="1">
    <location>
        <position position="43"/>
    </location>
    <ligand>
        <name>substrate</name>
    </ligand>
</feature>
<feature type="binding site" evidence="1">
    <location>
        <position position="56"/>
    </location>
    <ligand>
        <name>ATP</name>
        <dbReference type="ChEBI" id="CHEBI:30616"/>
    </ligand>
</feature>
<feature type="binding site" evidence="1">
    <location>
        <position position="56"/>
    </location>
    <ligand>
        <name>Mg(2+)</name>
        <dbReference type="ChEBI" id="CHEBI:18420"/>
    </ligand>
</feature>
<feature type="binding site" evidence="1">
    <location>
        <begin position="117"/>
        <end position="120"/>
    </location>
    <ligand>
        <name>ATP</name>
        <dbReference type="ChEBI" id="CHEBI:30616"/>
    </ligand>
</feature>
<feature type="binding site" evidence="1">
    <location>
        <position position="117"/>
    </location>
    <ligand>
        <name>Mg(2+)</name>
        <dbReference type="ChEBI" id="CHEBI:18420"/>
    </ligand>
</feature>
<feature type="binding site" evidence="1">
    <location>
        <begin position="177"/>
        <end position="178"/>
    </location>
    <ligand>
        <name>ATP</name>
        <dbReference type="ChEBI" id="CHEBI:30616"/>
    </ligand>
</feature>
<comment type="function">
    <text evidence="1">Catalyzes a mechanistically unusual reaction, the ATP-dependent insertion of CO2 between the N7 and N8 nitrogen atoms of 7,8-diaminopelargonic acid (DAPA, also called 7,8-diammoniononanoate) to form a ureido ring.</text>
</comment>
<comment type="catalytic activity">
    <reaction evidence="1">
        <text>(7R,8S)-7,8-diammoniononanoate + CO2 + ATP = (4R,5S)-dethiobiotin + ADP + phosphate + 3 H(+)</text>
        <dbReference type="Rhea" id="RHEA:15805"/>
        <dbReference type="ChEBI" id="CHEBI:15378"/>
        <dbReference type="ChEBI" id="CHEBI:16526"/>
        <dbReference type="ChEBI" id="CHEBI:30616"/>
        <dbReference type="ChEBI" id="CHEBI:43474"/>
        <dbReference type="ChEBI" id="CHEBI:149469"/>
        <dbReference type="ChEBI" id="CHEBI:149473"/>
        <dbReference type="ChEBI" id="CHEBI:456216"/>
        <dbReference type="EC" id="6.3.3.3"/>
    </reaction>
</comment>
<comment type="cofactor">
    <cofactor evidence="1">
        <name>Mg(2+)</name>
        <dbReference type="ChEBI" id="CHEBI:18420"/>
    </cofactor>
</comment>
<comment type="pathway">
    <text evidence="1">Cofactor biosynthesis; biotin biosynthesis; biotin from 7,8-diaminononanoate: step 1/2.</text>
</comment>
<comment type="subunit">
    <text evidence="1">Homodimer.</text>
</comment>
<comment type="subcellular location">
    <subcellularLocation>
        <location evidence="1">Cytoplasm</location>
    </subcellularLocation>
</comment>
<comment type="similarity">
    <text evidence="1">Belongs to the dethiobiotin synthetase family.</text>
</comment>
<gene>
    <name evidence="1" type="primary">bioD</name>
    <name type="ordered locus">PXO_03143</name>
</gene>
<accession>B2SQ77</accession>
<evidence type="ECO:0000255" key="1">
    <source>
        <dbReference type="HAMAP-Rule" id="MF_00336"/>
    </source>
</evidence>
<name>BIOD_XANOP</name>
<proteinExistence type="inferred from homology"/>